<dbReference type="EMBL" id="Z75163">
    <property type="protein sequence ID" value="CAA99477.1"/>
    <property type="molecule type" value="Genomic_DNA"/>
</dbReference>
<dbReference type="EMBL" id="AY557758">
    <property type="protein sequence ID" value="AAS56084.1"/>
    <property type="molecule type" value="Genomic_DNA"/>
</dbReference>
<dbReference type="EMBL" id="BK006948">
    <property type="protein sequence ID" value="DAA11022.1"/>
    <property type="molecule type" value="Genomic_DNA"/>
</dbReference>
<dbReference type="PIR" id="S67152">
    <property type="entry name" value="S67152"/>
</dbReference>
<dbReference type="RefSeq" id="NP_014898.3">
    <property type="nucleotide sequence ID" value="NM_001183674.3"/>
</dbReference>
<dbReference type="BioGRID" id="34645">
    <property type="interactions" value="20"/>
</dbReference>
<dbReference type="FunCoup" id="Q08692">
    <property type="interactions" value="35"/>
</dbReference>
<dbReference type="IntAct" id="Q08692">
    <property type="interactions" value="2"/>
</dbReference>
<dbReference type="STRING" id="4932.YOR255W"/>
<dbReference type="PaxDb" id="4932-YOR255W"/>
<dbReference type="PeptideAtlas" id="Q08692"/>
<dbReference type="TopDownProteomics" id="Q08692"/>
<dbReference type="EnsemblFungi" id="YOR255W_mRNA">
    <property type="protein sequence ID" value="YOR255W"/>
    <property type="gene ID" value="YOR255W"/>
</dbReference>
<dbReference type="GeneID" id="854429"/>
<dbReference type="KEGG" id="sce:YOR255W"/>
<dbReference type="AGR" id="SGD:S000005781"/>
<dbReference type="SGD" id="S000005781">
    <property type="gene designation" value="OSW1"/>
</dbReference>
<dbReference type="VEuPathDB" id="FungiDB:YOR255W"/>
<dbReference type="eggNOG" id="ENOG502S21W">
    <property type="taxonomic scope" value="Eukaryota"/>
</dbReference>
<dbReference type="HOGENOM" id="CLU_069887_1_0_1"/>
<dbReference type="InParanoid" id="Q08692"/>
<dbReference type="OMA" id="KLKRRWH"/>
<dbReference type="OrthoDB" id="4058291at2759"/>
<dbReference type="BioCyc" id="YEAST:G3O-33746-MONOMER"/>
<dbReference type="BioGRID-ORCS" id="854429">
    <property type="hits" value="1 hit in 10 CRISPR screens"/>
</dbReference>
<dbReference type="CD-CODE" id="876000F7">
    <property type="entry name" value="Centrosome"/>
</dbReference>
<dbReference type="PRO" id="PR:Q08692"/>
<dbReference type="Proteomes" id="UP000002311">
    <property type="component" value="Chromosome XV"/>
</dbReference>
<dbReference type="RNAct" id="Q08692">
    <property type="molecule type" value="protein"/>
</dbReference>
<dbReference type="GO" id="GO:0005628">
    <property type="term" value="C:prospore membrane"/>
    <property type="evidence" value="ECO:0000314"/>
    <property type="project" value="SGD"/>
</dbReference>
<dbReference type="GO" id="GO:0031160">
    <property type="term" value="C:spore wall"/>
    <property type="evidence" value="ECO:0007669"/>
    <property type="project" value="UniProtKB-SubCell"/>
</dbReference>
<dbReference type="GO" id="GO:0030437">
    <property type="term" value="P:ascospore formation"/>
    <property type="evidence" value="ECO:0000315"/>
    <property type="project" value="SGD"/>
</dbReference>
<dbReference type="GO" id="GO:0030476">
    <property type="term" value="P:ascospore wall assembly"/>
    <property type="evidence" value="ECO:0000315"/>
    <property type="project" value="SGD"/>
</dbReference>
<protein>
    <recommendedName>
        <fullName>Outer spore wall protein 1</fullName>
    </recommendedName>
</protein>
<comment type="function">
    <text evidence="1">May be involved in a late step of spore wall assembly.</text>
</comment>
<comment type="subcellular location">
    <subcellularLocation>
        <location evidence="1">Spore wall</location>
    </subcellularLocation>
    <text>Predominantly at sites of spore-spore contact.</text>
</comment>
<gene>
    <name type="primary">OSW1</name>
    <name type="ordered locus">YOR255W</name>
</gene>
<proteinExistence type="predicted"/>
<sequence length="278" mass="32758">MRAPPSPRKSKSGHFFYLYFRLCQLFSGRKLKRRWHVHKLHIHQYNTRWNLSPLSEIHIEDMINEPSGLCPGSSKKKPLLIARFPKGCQESPRVYVLQRNNLSRLKLSKRKYALRFYHNEIFGNNLKRKDGSIHKVEHQQCAETVRKIKKVTANHADVKIIFHDKNTIRSDKLGGRSNKMQTRPSVLEEDVEEEVSSVYIRFCDDHSLRVKDYHSLHRHSKKSSKEKRNNQEIGKSKLLGKLFEEETSRQNKGVEKKLDTIVIQKFQNYPIVSFSRVI</sequence>
<organism>
    <name type="scientific">Saccharomyces cerevisiae (strain ATCC 204508 / S288c)</name>
    <name type="common">Baker's yeast</name>
    <dbReference type="NCBI Taxonomy" id="559292"/>
    <lineage>
        <taxon>Eukaryota</taxon>
        <taxon>Fungi</taxon>
        <taxon>Dikarya</taxon>
        <taxon>Ascomycota</taxon>
        <taxon>Saccharomycotina</taxon>
        <taxon>Saccharomycetes</taxon>
        <taxon>Saccharomycetales</taxon>
        <taxon>Saccharomycetaceae</taxon>
        <taxon>Saccharomyces</taxon>
    </lineage>
</organism>
<accession>Q08692</accession>
<accession>D6W2V6</accession>
<feature type="chain" id="PRO_0000268695" description="Outer spore wall protein 1">
    <location>
        <begin position="1"/>
        <end position="278"/>
    </location>
</feature>
<keyword id="KW-1185">Reference proteome</keyword>
<keyword id="KW-0749">Sporulation</keyword>
<name>OSW1_YEAST</name>
<evidence type="ECO:0000269" key="1">
    <source>
    </source>
</evidence>
<reference key="1">
    <citation type="journal article" date="1997" name="Yeast">
        <title>Sequencing analysis of a 36.8 kb fragment of yeast chromosome XV reveals 26 open reading frames including SEC63, CDC31, SUG2, GCD1, RBL2, PNT1, PAC1 and VPH1.</title>
        <authorList>
            <person name="Poirey R."/>
            <person name="Jauniaux J.-C."/>
        </authorList>
    </citation>
    <scope>NUCLEOTIDE SEQUENCE [GENOMIC DNA]</scope>
</reference>
<reference key="2">
    <citation type="journal article" date="1997" name="Nature">
        <title>The nucleotide sequence of Saccharomyces cerevisiae chromosome XV.</title>
        <authorList>
            <person name="Dujon B."/>
            <person name="Albermann K."/>
            <person name="Aldea M."/>
            <person name="Alexandraki D."/>
            <person name="Ansorge W."/>
            <person name="Arino J."/>
            <person name="Benes V."/>
            <person name="Bohn C."/>
            <person name="Bolotin-Fukuhara M."/>
            <person name="Bordonne R."/>
            <person name="Boyer J."/>
            <person name="Camasses A."/>
            <person name="Casamayor A."/>
            <person name="Casas C."/>
            <person name="Cheret G."/>
            <person name="Cziepluch C."/>
            <person name="Daignan-Fornier B."/>
            <person name="Dang V.-D."/>
            <person name="de Haan M."/>
            <person name="Delius H."/>
            <person name="Durand P."/>
            <person name="Fairhead C."/>
            <person name="Feldmann H."/>
            <person name="Gaillon L."/>
            <person name="Galisson F."/>
            <person name="Gamo F.-J."/>
            <person name="Gancedo C."/>
            <person name="Goffeau A."/>
            <person name="Goulding S.E."/>
            <person name="Grivell L.A."/>
            <person name="Habbig B."/>
            <person name="Hand N.J."/>
            <person name="Hani J."/>
            <person name="Hattenhorst U."/>
            <person name="Hebling U."/>
            <person name="Hernando Y."/>
            <person name="Herrero E."/>
            <person name="Heumann K."/>
            <person name="Hiesel R."/>
            <person name="Hilger F."/>
            <person name="Hofmann B."/>
            <person name="Hollenberg C.P."/>
            <person name="Hughes B."/>
            <person name="Jauniaux J.-C."/>
            <person name="Kalogeropoulos A."/>
            <person name="Katsoulou C."/>
            <person name="Kordes E."/>
            <person name="Lafuente M.J."/>
            <person name="Landt O."/>
            <person name="Louis E.J."/>
            <person name="Maarse A.C."/>
            <person name="Madania A."/>
            <person name="Mannhaupt G."/>
            <person name="Marck C."/>
            <person name="Martin R.P."/>
            <person name="Mewes H.-W."/>
            <person name="Michaux G."/>
            <person name="Paces V."/>
            <person name="Parle-McDermott A.G."/>
            <person name="Pearson B.M."/>
            <person name="Perrin A."/>
            <person name="Pettersson B."/>
            <person name="Poch O."/>
            <person name="Pohl T.M."/>
            <person name="Poirey R."/>
            <person name="Portetelle D."/>
            <person name="Pujol A."/>
            <person name="Purnelle B."/>
            <person name="Ramezani Rad M."/>
            <person name="Rechmann S."/>
            <person name="Schwager C."/>
            <person name="Schweizer M."/>
            <person name="Sor F."/>
            <person name="Sterky F."/>
            <person name="Tarassov I.A."/>
            <person name="Teodoru C."/>
            <person name="Tettelin H."/>
            <person name="Thierry A."/>
            <person name="Tobiasch E."/>
            <person name="Tzermia M."/>
            <person name="Uhlen M."/>
            <person name="Unseld M."/>
            <person name="Valens M."/>
            <person name="Vandenbol M."/>
            <person name="Vetter I."/>
            <person name="Vlcek C."/>
            <person name="Voet M."/>
            <person name="Volckaert G."/>
            <person name="Voss H."/>
            <person name="Wambutt R."/>
            <person name="Wedler H."/>
            <person name="Wiemann S."/>
            <person name="Winsor B."/>
            <person name="Wolfe K.H."/>
            <person name="Zollner A."/>
            <person name="Zumstein E."/>
            <person name="Kleine K."/>
        </authorList>
    </citation>
    <scope>NUCLEOTIDE SEQUENCE [LARGE SCALE GENOMIC DNA]</scope>
    <source>
        <strain>ATCC 204508 / S288c</strain>
    </source>
</reference>
<reference key="3">
    <citation type="journal article" date="2014" name="G3 (Bethesda)">
        <title>The reference genome sequence of Saccharomyces cerevisiae: Then and now.</title>
        <authorList>
            <person name="Engel S.R."/>
            <person name="Dietrich F.S."/>
            <person name="Fisk D.G."/>
            <person name="Binkley G."/>
            <person name="Balakrishnan R."/>
            <person name="Costanzo M.C."/>
            <person name="Dwight S.S."/>
            <person name="Hitz B.C."/>
            <person name="Karra K."/>
            <person name="Nash R.S."/>
            <person name="Weng S."/>
            <person name="Wong E.D."/>
            <person name="Lloyd P."/>
            <person name="Skrzypek M.S."/>
            <person name="Miyasato S.R."/>
            <person name="Simison M."/>
            <person name="Cherry J.M."/>
        </authorList>
    </citation>
    <scope>GENOME REANNOTATION</scope>
    <source>
        <strain>ATCC 204508 / S288c</strain>
    </source>
</reference>
<reference key="4">
    <citation type="journal article" date="2007" name="Genome Res.">
        <title>Approaching a complete repository of sequence-verified protein-encoding clones for Saccharomyces cerevisiae.</title>
        <authorList>
            <person name="Hu Y."/>
            <person name="Rolfs A."/>
            <person name="Bhullar B."/>
            <person name="Murthy T.V.S."/>
            <person name="Zhu C."/>
            <person name="Berger M.F."/>
            <person name="Camargo A.A."/>
            <person name="Kelley F."/>
            <person name="McCarron S."/>
            <person name="Jepson D."/>
            <person name="Richardson A."/>
            <person name="Raphael J."/>
            <person name="Moreira D."/>
            <person name="Taycher E."/>
            <person name="Zuo D."/>
            <person name="Mohr S."/>
            <person name="Kane M.F."/>
            <person name="Williamson J."/>
            <person name="Simpson A.J.G."/>
            <person name="Bulyk M.L."/>
            <person name="Harlow E."/>
            <person name="Marsischky G."/>
            <person name="Kolodner R.D."/>
            <person name="LaBaer J."/>
        </authorList>
    </citation>
    <scope>NUCLEOTIDE SEQUENCE [GENOMIC DNA]</scope>
    <source>
        <strain>ATCC 204508 / S288c</strain>
    </source>
</reference>
<reference key="5">
    <citation type="journal article" date="2004" name="Eukaryot. Cell">
        <title>Morphogenetic pathway of spore wall assembly in Saccharomyces cerevisiae.</title>
        <authorList>
            <person name="Coluccio A."/>
            <person name="Bogengruber E."/>
            <person name="Conrad M.N."/>
            <person name="Dresser M.E."/>
            <person name="Briza P."/>
            <person name="Neiman A.M."/>
        </authorList>
    </citation>
    <scope>FUNCTION</scope>
    <scope>SUBCELLULAR LOCATION</scope>
</reference>